<sequence>MTRPVRTRFAPSPTGFIHLGNIRSALYPWAFARKMKGTFVLRIEDTDVERSSQEAVDAILEGMQWLGLDFDEGPIYQMQRMDRYREVLAQMLEKGLAYPCYMSAEELDALRERQREAGLKPRYDGTWRPEPGKVLPEPPAGVKPVLRFRNPLTGTVVWDDAVKGRVEISNEELDDLVIARPDGTPIYNFCVVVDDMDMGITHVIRGDDHVNNTPRQINILNALGGEPPVYAHLPTVLNEQGEKMSKRHGAMSVMAYRDAGFLPEAVVNYLARLGWSHGDAEIFSREQFVEWFDLEHLGKSPAQYDHSKLSWLNAHYIKEADNARLAELAKPFLDALGIDDAAIATGPALDAVVGLMKDRATTVKEIAEGATMFYRVPAPEADALAQHVTDAVRPALADLVAALKAADWTKEAVSAALKATLAAHKLKMPQLAMPVRLLVAGTTHTPSIDAVLVLFGRDVVVSRIEAALA</sequence>
<feature type="chain" id="PRO_1000090057" description="Glutamate--tRNA ligase">
    <location>
        <begin position="1"/>
        <end position="469"/>
    </location>
</feature>
<feature type="short sequence motif" description="'HIGH' region" evidence="1">
    <location>
        <begin position="11"/>
        <end position="21"/>
    </location>
</feature>
<feature type="short sequence motif" description="'KMSKS' region" evidence="1">
    <location>
        <begin position="243"/>
        <end position="247"/>
    </location>
</feature>
<feature type="binding site" evidence="1">
    <location>
        <position position="246"/>
    </location>
    <ligand>
        <name>ATP</name>
        <dbReference type="ChEBI" id="CHEBI:30616"/>
    </ligand>
</feature>
<accession>B4ECR7</accession>
<proteinExistence type="inferred from homology"/>
<name>SYE_BURCJ</name>
<dbReference type="EC" id="6.1.1.17" evidence="1"/>
<dbReference type="EMBL" id="AM747720">
    <property type="protein sequence ID" value="CAR52427.1"/>
    <property type="molecule type" value="Genomic_DNA"/>
</dbReference>
<dbReference type="RefSeq" id="WP_006481951.1">
    <property type="nucleotide sequence ID" value="NC_011000.1"/>
</dbReference>
<dbReference type="SMR" id="B4ECR7"/>
<dbReference type="GeneID" id="56558623"/>
<dbReference type="KEGG" id="bcj:BCAL2126"/>
<dbReference type="eggNOG" id="COG0008">
    <property type="taxonomic scope" value="Bacteria"/>
</dbReference>
<dbReference type="HOGENOM" id="CLU_015768_6_0_4"/>
<dbReference type="BioCyc" id="BCEN216591:G1G1V-2334-MONOMER"/>
<dbReference type="Proteomes" id="UP000001035">
    <property type="component" value="Chromosome 1"/>
</dbReference>
<dbReference type="GO" id="GO:0005829">
    <property type="term" value="C:cytosol"/>
    <property type="evidence" value="ECO:0007669"/>
    <property type="project" value="TreeGrafter"/>
</dbReference>
<dbReference type="GO" id="GO:0005524">
    <property type="term" value="F:ATP binding"/>
    <property type="evidence" value="ECO:0007669"/>
    <property type="project" value="UniProtKB-UniRule"/>
</dbReference>
<dbReference type="GO" id="GO:0004818">
    <property type="term" value="F:glutamate-tRNA ligase activity"/>
    <property type="evidence" value="ECO:0007669"/>
    <property type="project" value="UniProtKB-UniRule"/>
</dbReference>
<dbReference type="GO" id="GO:0000049">
    <property type="term" value="F:tRNA binding"/>
    <property type="evidence" value="ECO:0007669"/>
    <property type="project" value="InterPro"/>
</dbReference>
<dbReference type="GO" id="GO:0008270">
    <property type="term" value="F:zinc ion binding"/>
    <property type="evidence" value="ECO:0007669"/>
    <property type="project" value="InterPro"/>
</dbReference>
<dbReference type="GO" id="GO:0006424">
    <property type="term" value="P:glutamyl-tRNA aminoacylation"/>
    <property type="evidence" value="ECO:0007669"/>
    <property type="project" value="UniProtKB-UniRule"/>
</dbReference>
<dbReference type="CDD" id="cd00808">
    <property type="entry name" value="GluRS_core"/>
    <property type="match status" value="1"/>
</dbReference>
<dbReference type="FunFam" id="3.40.50.620:FF:000007">
    <property type="entry name" value="Glutamate--tRNA ligase"/>
    <property type="match status" value="1"/>
</dbReference>
<dbReference type="Gene3D" id="1.10.10.350">
    <property type="match status" value="1"/>
</dbReference>
<dbReference type="Gene3D" id="1.10.8.70">
    <property type="entry name" value="Glutamate-tRNA synthetase, class I, anticodon-binding domain 1"/>
    <property type="match status" value="1"/>
</dbReference>
<dbReference type="Gene3D" id="3.40.50.620">
    <property type="entry name" value="HUPs"/>
    <property type="match status" value="1"/>
</dbReference>
<dbReference type="HAMAP" id="MF_00022">
    <property type="entry name" value="Glu_tRNA_synth_type1"/>
    <property type="match status" value="1"/>
</dbReference>
<dbReference type="InterPro" id="IPR045462">
    <property type="entry name" value="aa-tRNA-synth_I_cd-bd"/>
</dbReference>
<dbReference type="InterPro" id="IPR020751">
    <property type="entry name" value="aa-tRNA-synth_I_codon-bd_sub2"/>
</dbReference>
<dbReference type="InterPro" id="IPR001412">
    <property type="entry name" value="aa-tRNA-synth_I_CS"/>
</dbReference>
<dbReference type="InterPro" id="IPR008925">
    <property type="entry name" value="aa_tRNA-synth_I_cd-bd_sf"/>
</dbReference>
<dbReference type="InterPro" id="IPR004527">
    <property type="entry name" value="Glu-tRNA-ligase_bac/mito"/>
</dbReference>
<dbReference type="InterPro" id="IPR020752">
    <property type="entry name" value="Glu-tRNA-synth_I_codon-bd_sub1"/>
</dbReference>
<dbReference type="InterPro" id="IPR000924">
    <property type="entry name" value="Glu/Gln-tRNA-synth"/>
</dbReference>
<dbReference type="InterPro" id="IPR020058">
    <property type="entry name" value="Glu/Gln-tRNA-synth_Ib_cat-dom"/>
</dbReference>
<dbReference type="InterPro" id="IPR049940">
    <property type="entry name" value="GluQ/Sye"/>
</dbReference>
<dbReference type="InterPro" id="IPR033910">
    <property type="entry name" value="GluRS_core"/>
</dbReference>
<dbReference type="InterPro" id="IPR014729">
    <property type="entry name" value="Rossmann-like_a/b/a_fold"/>
</dbReference>
<dbReference type="NCBIfam" id="TIGR00464">
    <property type="entry name" value="gltX_bact"/>
    <property type="match status" value="1"/>
</dbReference>
<dbReference type="PANTHER" id="PTHR43311">
    <property type="entry name" value="GLUTAMATE--TRNA LIGASE"/>
    <property type="match status" value="1"/>
</dbReference>
<dbReference type="PANTHER" id="PTHR43311:SF2">
    <property type="entry name" value="GLUTAMATE--TRNA LIGASE, MITOCHONDRIAL-RELATED"/>
    <property type="match status" value="1"/>
</dbReference>
<dbReference type="Pfam" id="PF19269">
    <property type="entry name" value="Anticodon_2"/>
    <property type="match status" value="1"/>
</dbReference>
<dbReference type="Pfam" id="PF00749">
    <property type="entry name" value="tRNA-synt_1c"/>
    <property type="match status" value="1"/>
</dbReference>
<dbReference type="PRINTS" id="PR00987">
    <property type="entry name" value="TRNASYNTHGLU"/>
</dbReference>
<dbReference type="SUPFAM" id="SSF48163">
    <property type="entry name" value="An anticodon-binding domain of class I aminoacyl-tRNA synthetases"/>
    <property type="match status" value="1"/>
</dbReference>
<dbReference type="SUPFAM" id="SSF52374">
    <property type="entry name" value="Nucleotidylyl transferase"/>
    <property type="match status" value="1"/>
</dbReference>
<dbReference type="PROSITE" id="PS00178">
    <property type="entry name" value="AA_TRNA_LIGASE_I"/>
    <property type="match status" value="1"/>
</dbReference>
<comment type="function">
    <text evidence="1">Catalyzes the attachment of glutamate to tRNA(Glu) in a two-step reaction: glutamate is first activated by ATP to form Glu-AMP and then transferred to the acceptor end of tRNA(Glu).</text>
</comment>
<comment type="catalytic activity">
    <reaction evidence="1">
        <text>tRNA(Glu) + L-glutamate + ATP = L-glutamyl-tRNA(Glu) + AMP + diphosphate</text>
        <dbReference type="Rhea" id="RHEA:23540"/>
        <dbReference type="Rhea" id="RHEA-COMP:9663"/>
        <dbReference type="Rhea" id="RHEA-COMP:9680"/>
        <dbReference type="ChEBI" id="CHEBI:29985"/>
        <dbReference type="ChEBI" id="CHEBI:30616"/>
        <dbReference type="ChEBI" id="CHEBI:33019"/>
        <dbReference type="ChEBI" id="CHEBI:78442"/>
        <dbReference type="ChEBI" id="CHEBI:78520"/>
        <dbReference type="ChEBI" id="CHEBI:456215"/>
        <dbReference type="EC" id="6.1.1.17"/>
    </reaction>
</comment>
<comment type="subunit">
    <text evidence="1">Monomer.</text>
</comment>
<comment type="subcellular location">
    <subcellularLocation>
        <location evidence="1">Cytoplasm</location>
    </subcellularLocation>
</comment>
<comment type="similarity">
    <text evidence="1">Belongs to the class-I aminoacyl-tRNA synthetase family. Glutamate--tRNA ligase type 1 subfamily.</text>
</comment>
<keyword id="KW-0030">Aminoacyl-tRNA synthetase</keyword>
<keyword id="KW-0067">ATP-binding</keyword>
<keyword id="KW-0963">Cytoplasm</keyword>
<keyword id="KW-0436">Ligase</keyword>
<keyword id="KW-0547">Nucleotide-binding</keyword>
<keyword id="KW-0648">Protein biosynthesis</keyword>
<gene>
    <name evidence="1" type="primary">gltX</name>
    <name type="ordered locus">BceJ2315_20890</name>
    <name type="ORF">BCAL2126</name>
</gene>
<evidence type="ECO:0000255" key="1">
    <source>
        <dbReference type="HAMAP-Rule" id="MF_00022"/>
    </source>
</evidence>
<protein>
    <recommendedName>
        <fullName evidence="1">Glutamate--tRNA ligase</fullName>
        <ecNumber evidence="1">6.1.1.17</ecNumber>
    </recommendedName>
    <alternativeName>
        <fullName evidence="1">Glutamyl-tRNA synthetase</fullName>
        <shortName evidence="1">GluRS</shortName>
    </alternativeName>
</protein>
<organism>
    <name type="scientific">Burkholderia cenocepacia (strain ATCC BAA-245 / DSM 16553 / LMG 16656 / NCTC 13227 / J2315 / CF5610)</name>
    <name type="common">Burkholderia cepacia (strain J2315)</name>
    <dbReference type="NCBI Taxonomy" id="216591"/>
    <lineage>
        <taxon>Bacteria</taxon>
        <taxon>Pseudomonadati</taxon>
        <taxon>Pseudomonadota</taxon>
        <taxon>Betaproteobacteria</taxon>
        <taxon>Burkholderiales</taxon>
        <taxon>Burkholderiaceae</taxon>
        <taxon>Burkholderia</taxon>
        <taxon>Burkholderia cepacia complex</taxon>
    </lineage>
</organism>
<reference key="1">
    <citation type="journal article" date="2009" name="J. Bacteriol.">
        <title>The genome of Burkholderia cenocepacia J2315, an epidemic pathogen of cystic fibrosis patients.</title>
        <authorList>
            <person name="Holden M.T."/>
            <person name="Seth-Smith H.M."/>
            <person name="Crossman L.C."/>
            <person name="Sebaihia M."/>
            <person name="Bentley S.D."/>
            <person name="Cerdeno-Tarraga A.M."/>
            <person name="Thomson N.R."/>
            <person name="Bason N."/>
            <person name="Quail M.A."/>
            <person name="Sharp S."/>
            <person name="Cherevach I."/>
            <person name="Churcher C."/>
            <person name="Goodhead I."/>
            <person name="Hauser H."/>
            <person name="Holroyd N."/>
            <person name="Mungall K."/>
            <person name="Scott P."/>
            <person name="Walker D."/>
            <person name="White B."/>
            <person name="Rose H."/>
            <person name="Iversen P."/>
            <person name="Mil-Homens D."/>
            <person name="Rocha E.P."/>
            <person name="Fialho A.M."/>
            <person name="Baldwin A."/>
            <person name="Dowson C."/>
            <person name="Barrell B.G."/>
            <person name="Govan J.R."/>
            <person name="Vandamme P."/>
            <person name="Hart C.A."/>
            <person name="Mahenthiralingam E."/>
            <person name="Parkhill J."/>
        </authorList>
    </citation>
    <scope>NUCLEOTIDE SEQUENCE [LARGE SCALE GENOMIC DNA]</scope>
    <source>
        <strain>ATCC BAA-245 / DSM 16553 / LMG 16656 / NCTC 13227 / J2315 / CF5610</strain>
    </source>
</reference>